<comment type="function">
    <text evidence="1">Translocates 4-amino-4-deoxy-L-arabinose-phosphoundecaprenol (alpha-L-Ara4N-phosphoundecaprenol) from the cytoplasmic to the periplasmic side of the inner membrane.</text>
</comment>
<comment type="pathway">
    <text evidence="1">Bacterial outer membrane biogenesis; lipopolysaccharide biosynthesis.</text>
</comment>
<comment type="subunit">
    <text evidence="1">Heterodimer of ArnE and ArnF.</text>
</comment>
<comment type="subcellular location">
    <subcellularLocation>
        <location evidence="1">Cell inner membrane</location>
        <topology evidence="1">Multi-pass membrane protein</topology>
    </subcellularLocation>
</comment>
<comment type="similarity">
    <text evidence="1">Belongs to the ArnF family.</text>
</comment>
<feature type="chain" id="PRO_0000382014" description="Probable 4-amino-4-deoxy-L-arabinose-phosphoundecaprenol flippase subunit ArnF">
    <location>
        <begin position="1"/>
        <end position="137"/>
    </location>
</feature>
<feature type="transmembrane region" description="Helical" evidence="1">
    <location>
        <begin position="43"/>
        <end position="63"/>
    </location>
</feature>
<feature type="transmembrane region" description="Helical" evidence="1">
    <location>
        <begin position="74"/>
        <end position="94"/>
    </location>
</feature>
<feature type="transmembrane region" description="Helical" evidence="1">
    <location>
        <begin position="98"/>
        <end position="118"/>
    </location>
</feature>
<reference key="1">
    <citation type="journal article" date="2005" name="J. Bacteriol.">
        <title>Whole-genome sequence analysis of Pseudomonas syringae pv. phaseolicola 1448A reveals divergence among pathovars in genes involved in virulence and transposition.</title>
        <authorList>
            <person name="Joardar V."/>
            <person name="Lindeberg M."/>
            <person name="Jackson R.W."/>
            <person name="Selengut J."/>
            <person name="Dodson R."/>
            <person name="Brinkac L.M."/>
            <person name="Daugherty S.C."/>
            <person name="DeBoy R.T."/>
            <person name="Durkin A.S."/>
            <person name="Gwinn Giglio M."/>
            <person name="Madupu R."/>
            <person name="Nelson W.C."/>
            <person name="Rosovitz M.J."/>
            <person name="Sullivan S.A."/>
            <person name="Crabtree J."/>
            <person name="Creasy T."/>
            <person name="Davidsen T.M."/>
            <person name="Haft D.H."/>
            <person name="Zafar N."/>
            <person name="Zhou L."/>
            <person name="Halpin R."/>
            <person name="Holley T."/>
            <person name="Khouri H.M."/>
            <person name="Feldblyum T.V."/>
            <person name="White O."/>
            <person name="Fraser C.M."/>
            <person name="Chatterjee A.K."/>
            <person name="Cartinhour S."/>
            <person name="Schneider D."/>
            <person name="Mansfield J.W."/>
            <person name="Collmer A."/>
            <person name="Buell R."/>
        </authorList>
    </citation>
    <scope>NUCLEOTIDE SEQUENCE [LARGE SCALE GENOMIC DNA]</scope>
    <source>
        <strain>1448A / Race 6</strain>
    </source>
</reference>
<sequence length="137" mass="15022">MCALTSVALVSSAQLGMRWSMSRLPSPGQWLDLQDIGQVQSSAIAVICASITAYALSMLFWLLALRDLPLSRAYSLLSISYALVYTLAATLPFFHETFTVSKTVGVTLIVAGVLTINLRRISSPSLQDLSHENQRFR</sequence>
<gene>
    <name evidence="1" type="primary">arnF</name>
    <name type="ordered locus">PSPPH_2808</name>
</gene>
<keyword id="KW-0997">Cell inner membrane</keyword>
<keyword id="KW-1003">Cell membrane</keyword>
<keyword id="KW-0441">Lipid A biosynthesis</keyword>
<keyword id="KW-0444">Lipid biosynthesis</keyword>
<keyword id="KW-0443">Lipid metabolism</keyword>
<keyword id="KW-0448">Lipopolysaccharide biosynthesis</keyword>
<keyword id="KW-0472">Membrane</keyword>
<keyword id="KW-0812">Transmembrane</keyword>
<keyword id="KW-1133">Transmembrane helix</keyword>
<keyword id="KW-0813">Transport</keyword>
<dbReference type="EMBL" id="CP000058">
    <property type="protein sequence ID" value="AAZ33856.1"/>
    <property type="molecule type" value="Genomic_DNA"/>
</dbReference>
<dbReference type="KEGG" id="psp:PSPPH_2808"/>
<dbReference type="eggNOG" id="COG2076">
    <property type="taxonomic scope" value="Bacteria"/>
</dbReference>
<dbReference type="HOGENOM" id="CLU_131462_1_0_6"/>
<dbReference type="UniPathway" id="UPA00030"/>
<dbReference type="Proteomes" id="UP000000551">
    <property type="component" value="Chromosome"/>
</dbReference>
<dbReference type="GO" id="GO:0005886">
    <property type="term" value="C:plasma membrane"/>
    <property type="evidence" value="ECO:0007669"/>
    <property type="project" value="UniProtKB-SubCell"/>
</dbReference>
<dbReference type="GO" id="GO:1901505">
    <property type="term" value="F:carbohydrate derivative transmembrane transporter activity"/>
    <property type="evidence" value="ECO:0007669"/>
    <property type="project" value="InterPro"/>
</dbReference>
<dbReference type="GO" id="GO:0009245">
    <property type="term" value="P:lipid A biosynthetic process"/>
    <property type="evidence" value="ECO:0007669"/>
    <property type="project" value="UniProtKB-UniRule"/>
</dbReference>
<dbReference type="GO" id="GO:0009103">
    <property type="term" value="P:lipopolysaccharide biosynthetic process"/>
    <property type="evidence" value="ECO:0007669"/>
    <property type="project" value="UniProtKB-UniRule"/>
</dbReference>
<dbReference type="Gene3D" id="1.10.3730.20">
    <property type="match status" value="1"/>
</dbReference>
<dbReference type="HAMAP" id="MF_00538">
    <property type="entry name" value="Flippase_ArnF"/>
    <property type="match status" value="1"/>
</dbReference>
<dbReference type="InterPro" id="IPR000620">
    <property type="entry name" value="EamA_dom"/>
</dbReference>
<dbReference type="InterPro" id="IPR022832">
    <property type="entry name" value="Flippase_ArnF"/>
</dbReference>
<dbReference type="InterPro" id="IPR000390">
    <property type="entry name" value="Small_drug/metabolite_transptr"/>
</dbReference>
<dbReference type="NCBIfam" id="NF002816">
    <property type="entry name" value="PRK02971.1-2"/>
    <property type="match status" value="1"/>
</dbReference>
<dbReference type="PANTHER" id="PTHR30561:SF9">
    <property type="entry name" value="4-AMINO-4-DEOXY-L-ARABINOSE-PHOSPHOUNDECAPRENOL FLIPPASE SUBUNIT ARNF-RELATED"/>
    <property type="match status" value="1"/>
</dbReference>
<dbReference type="PANTHER" id="PTHR30561">
    <property type="entry name" value="SMR FAMILY PROTON-DEPENDENT DRUG EFFLUX TRANSPORTER SUGE"/>
    <property type="match status" value="1"/>
</dbReference>
<dbReference type="Pfam" id="PF00892">
    <property type="entry name" value="EamA"/>
    <property type="match status" value="1"/>
</dbReference>
<dbReference type="SUPFAM" id="SSF103481">
    <property type="entry name" value="Multidrug resistance efflux transporter EmrE"/>
    <property type="match status" value="1"/>
</dbReference>
<name>ARNF_PSE14</name>
<accession>Q48HY7</accession>
<proteinExistence type="inferred from homology"/>
<evidence type="ECO:0000255" key="1">
    <source>
        <dbReference type="HAMAP-Rule" id="MF_00538"/>
    </source>
</evidence>
<organism>
    <name type="scientific">Pseudomonas savastanoi pv. phaseolicola (strain 1448A / Race 6)</name>
    <name type="common">Pseudomonas syringae pv. phaseolicola (strain 1448A / Race 6)</name>
    <dbReference type="NCBI Taxonomy" id="264730"/>
    <lineage>
        <taxon>Bacteria</taxon>
        <taxon>Pseudomonadati</taxon>
        <taxon>Pseudomonadota</taxon>
        <taxon>Gammaproteobacteria</taxon>
        <taxon>Pseudomonadales</taxon>
        <taxon>Pseudomonadaceae</taxon>
        <taxon>Pseudomonas</taxon>
    </lineage>
</organism>
<protein>
    <recommendedName>
        <fullName evidence="1">Probable 4-amino-4-deoxy-L-arabinose-phosphoundecaprenol flippase subunit ArnF</fullName>
        <shortName evidence="1">L-Ara4N-phosphoundecaprenol flippase subunit ArnF</shortName>
    </recommendedName>
    <alternativeName>
        <fullName evidence="1">Undecaprenyl phosphate-aminoarabinose flippase subunit ArnF</fullName>
    </alternativeName>
</protein>